<sequence length="418" mass="45497">MTVAEKIRKIAADARAASLAMARLSSAAKNELLLRMAEALENNAPLITAENARDLEAGQQKGLSAAMLDRLMLDESRIKAMADGLREVAALPDPVGEVTHMWKRPNEITVGKMRIPLGVIGIIYESRPNVTSDAAALCLKAGNAVVLRGGSEAIHSNLAIAGLLQDQMRKLGIPVAALSLIPFPERAGVTEMLKQEEFIDVIIPRGGESLIRFVVEHSKIPVIKHYKGVCHIFVDATADFGMAEKIIINSKTQRPGVCNALETLLIHKDVAETFVPRIHEALSTLKVELRGDEAFRQFAPGVKAATEEDWYAEYLELILAARVVDDLDEAIAHINKYGSLHTEAIITSDYANSQRFLREVNSSVVLVNASTRFSDGNQLGLGAEIGISTTKLHSFGPMGLEDLTTTKFIVYGEGQIRQ</sequence>
<protein>
    <recommendedName>
        <fullName evidence="1">Gamma-glutamyl phosphate reductase</fullName>
        <shortName evidence="1">GPR</shortName>
        <ecNumber evidence="1">1.2.1.41</ecNumber>
    </recommendedName>
    <alternativeName>
        <fullName evidence="1">Glutamate-5-semialdehyde dehydrogenase</fullName>
    </alternativeName>
    <alternativeName>
        <fullName evidence="1">Glutamyl-gamma-semialdehyde dehydrogenase</fullName>
        <shortName evidence="1">GSA dehydrogenase</shortName>
    </alternativeName>
</protein>
<organism>
    <name type="scientific">Geotalea daltonii (strain DSM 22248 / JCM 15807 / FRC-32)</name>
    <name type="common">Geobacter daltonii</name>
    <dbReference type="NCBI Taxonomy" id="316067"/>
    <lineage>
        <taxon>Bacteria</taxon>
        <taxon>Pseudomonadati</taxon>
        <taxon>Thermodesulfobacteriota</taxon>
        <taxon>Desulfuromonadia</taxon>
        <taxon>Geobacterales</taxon>
        <taxon>Geobacteraceae</taxon>
        <taxon>Geotalea</taxon>
    </lineage>
</organism>
<comment type="function">
    <text evidence="1">Catalyzes the NADPH-dependent reduction of L-glutamate 5-phosphate into L-glutamate 5-semialdehyde and phosphate. The product spontaneously undergoes cyclization to form 1-pyrroline-5-carboxylate.</text>
</comment>
<comment type="catalytic activity">
    <reaction evidence="1">
        <text>L-glutamate 5-semialdehyde + phosphate + NADP(+) = L-glutamyl 5-phosphate + NADPH + H(+)</text>
        <dbReference type="Rhea" id="RHEA:19541"/>
        <dbReference type="ChEBI" id="CHEBI:15378"/>
        <dbReference type="ChEBI" id="CHEBI:43474"/>
        <dbReference type="ChEBI" id="CHEBI:57783"/>
        <dbReference type="ChEBI" id="CHEBI:58066"/>
        <dbReference type="ChEBI" id="CHEBI:58274"/>
        <dbReference type="ChEBI" id="CHEBI:58349"/>
        <dbReference type="EC" id="1.2.1.41"/>
    </reaction>
</comment>
<comment type="pathway">
    <text evidence="1">Amino-acid biosynthesis; L-proline biosynthesis; L-glutamate 5-semialdehyde from L-glutamate: step 2/2.</text>
</comment>
<comment type="subcellular location">
    <subcellularLocation>
        <location evidence="1">Cytoplasm</location>
    </subcellularLocation>
</comment>
<comment type="similarity">
    <text evidence="1">Belongs to the gamma-glutamyl phosphate reductase family.</text>
</comment>
<accession>B9M0D6</accession>
<name>PROA_GEODF</name>
<evidence type="ECO:0000255" key="1">
    <source>
        <dbReference type="HAMAP-Rule" id="MF_00412"/>
    </source>
</evidence>
<proteinExistence type="inferred from homology"/>
<gene>
    <name evidence="1" type="primary">proA</name>
    <name type="ordered locus">Geob_0608</name>
</gene>
<dbReference type="EC" id="1.2.1.41" evidence="1"/>
<dbReference type="EMBL" id="CP001390">
    <property type="protein sequence ID" value="ACM18973.1"/>
    <property type="molecule type" value="Genomic_DNA"/>
</dbReference>
<dbReference type="RefSeq" id="WP_012645702.1">
    <property type="nucleotide sequence ID" value="NC_011979.1"/>
</dbReference>
<dbReference type="SMR" id="B9M0D6"/>
<dbReference type="STRING" id="316067.Geob_0608"/>
<dbReference type="KEGG" id="geo:Geob_0608"/>
<dbReference type="eggNOG" id="COG0014">
    <property type="taxonomic scope" value="Bacteria"/>
</dbReference>
<dbReference type="HOGENOM" id="CLU_030231_0_0_7"/>
<dbReference type="OrthoDB" id="9809970at2"/>
<dbReference type="UniPathway" id="UPA00098">
    <property type="reaction ID" value="UER00360"/>
</dbReference>
<dbReference type="Proteomes" id="UP000007721">
    <property type="component" value="Chromosome"/>
</dbReference>
<dbReference type="GO" id="GO:0005737">
    <property type="term" value="C:cytoplasm"/>
    <property type="evidence" value="ECO:0007669"/>
    <property type="project" value="UniProtKB-SubCell"/>
</dbReference>
<dbReference type="GO" id="GO:0004350">
    <property type="term" value="F:glutamate-5-semialdehyde dehydrogenase activity"/>
    <property type="evidence" value="ECO:0007669"/>
    <property type="project" value="UniProtKB-UniRule"/>
</dbReference>
<dbReference type="GO" id="GO:0050661">
    <property type="term" value="F:NADP binding"/>
    <property type="evidence" value="ECO:0007669"/>
    <property type="project" value="InterPro"/>
</dbReference>
<dbReference type="GO" id="GO:0055129">
    <property type="term" value="P:L-proline biosynthetic process"/>
    <property type="evidence" value="ECO:0007669"/>
    <property type="project" value="UniProtKB-UniRule"/>
</dbReference>
<dbReference type="CDD" id="cd07079">
    <property type="entry name" value="ALDH_F18-19_ProA-GPR"/>
    <property type="match status" value="1"/>
</dbReference>
<dbReference type="FunFam" id="3.40.309.10:FF:000006">
    <property type="entry name" value="Gamma-glutamyl phosphate reductase"/>
    <property type="match status" value="1"/>
</dbReference>
<dbReference type="Gene3D" id="3.40.605.10">
    <property type="entry name" value="Aldehyde Dehydrogenase, Chain A, domain 1"/>
    <property type="match status" value="1"/>
</dbReference>
<dbReference type="Gene3D" id="3.40.309.10">
    <property type="entry name" value="Aldehyde Dehydrogenase, Chain A, domain 2"/>
    <property type="match status" value="1"/>
</dbReference>
<dbReference type="HAMAP" id="MF_00412">
    <property type="entry name" value="ProA"/>
    <property type="match status" value="1"/>
</dbReference>
<dbReference type="InterPro" id="IPR016161">
    <property type="entry name" value="Ald_DH/histidinol_DH"/>
</dbReference>
<dbReference type="InterPro" id="IPR016163">
    <property type="entry name" value="Ald_DH_C"/>
</dbReference>
<dbReference type="InterPro" id="IPR016162">
    <property type="entry name" value="Ald_DH_N"/>
</dbReference>
<dbReference type="InterPro" id="IPR015590">
    <property type="entry name" value="Aldehyde_DH_dom"/>
</dbReference>
<dbReference type="InterPro" id="IPR020593">
    <property type="entry name" value="G-glutamylP_reductase_CS"/>
</dbReference>
<dbReference type="InterPro" id="IPR012134">
    <property type="entry name" value="Glu-5-SA_DH"/>
</dbReference>
<dbReference type="InterPro" id="IPR000965">
    <property type="entry name" value="GPR_dom"/>
</dbReference>
<dbReference type="NCBIfam" id="NF001221">
    <property type="entry name" value="PRK00197.1"/>
    <property type="match status" value="1"/>
</dbReference>
<dbReference type="NCBIfam" id="TIGR00407">
    <property type="entry name" value="proA"/>
    <property type="match status" value="1"/>
</dbReference>
<dbReference type="PANTHER" id="PTHR11063:SF8">
    <property type="entry name" value="DELTA-1-PYRROLINE-5-CARBOXYLATE SYNTHASE"/>
    <property type="match status" value="1"/>
</dbReference>
<dbReference type="PANTHER" id="PTHR11063">
    <property type="entry name" value="GLUTAMATE SEMIALDEHYDE DEHYDROGENASE"/>
    <property type="match status" value="1"/>
</dbReference>
<dbReference type="Pfam" id="PF00171">
    <property type="entry name" value="Aldedh"/>
    <property type="match status" value="1"/>
</dbReference>
<dbReference type="PIRSF" id="PIRSF000151">
    <property type="entry name" value="GPR"/>
    <property type="match status" value="1"/>
</dbReference>
<dbReference type="SUPFAM" id="SSF53720">
    <property type="entry name" value="ALDH-like"/>
    <property type="match status" value="1"/>
</dbReference>
<dbReference type="PROSITE" id="PS01223">
    <property type="entry name" value="PROA"/>
    <property type="match status" value="1"/>
</dbReference>
<feature type="chain" id="PRO_1000193613" description="Gamma-glutamyl phosphate reductase">
    <location>
        <begin position="1"/>
        <end position="418"/>
    </location>
</feature>
<reference key="1">
    <citation type="submission" date="2009-01" db="EMBL/GenBank/DDBJ databases">
        <title>Complete sequence of Geobacter sp. FRC-32.</title>
        <authorList>
            <consortium name="US DOE Joint Genome Institute"/>
            <person name="Lucas S."/>
            <person name="Copeland A."/>
            <person name="Lapidus A."/>
            <person name="Glavina del Rio T."/>
            <person name="Dalin E."/>
            <person name="Tice H."/>
            <person name="Bruce D."/>
            <person name="Goodwin L."/>
            <person name="Pitluck S."/>
            <person name="Saunders E."/>
            <person name="Brettin T."/>
            <person name="Detter J.C."/>
            <person name="Han C."/>
            <person name="Larimer F."/>
            <person name="Land M."/>
            <person name="Hauser L."/>
            <person name="Kyrpides N."/>
            <person name="Ovchinnikova G."/>
            <person name="Kostka J."/>
            <person name="Richardson P."/>
        </authorList>
    </citation>
    <scope>NUCLEOTIDE SEQUENCE [LARGE SCALE GENOMIC DNA]</scope>
    <source>
        <strain>DSM 22248 / JCM 15807 / FRC-32</strain>
    </source>
</reference>
<keyword id="KW-0028">Amino-acid biosynthesis</keyword>
<keyword id="KW-0963">Cytoplasm</keyword>
<keyword id="KW-0521">NADP</keyword>
<keyword id="KW-0560">Oxidoreductase</keyword>
<keyword id="KW-0641">Proline biosynthesis</keyword>
<keyword id="KW-1185">Reference proteome</keyword>